<proteinExistence type="inferred from homology"/>
<dbReference type="EC" id="2.4.2.7" evidence="1"/>
<dbReference type="EMBL" id="CP000153">
    <property type="protein sequence ID" value="ABB44396.1"/>
    <property type="molecule type" value="Genomic_DNA"/>
</dbReference>
<dbReference type="RefSeq" id="WP_011372748.1">
    <property type="nucleotide sequence ID" value="NC_007575.1"/>
</dbReference>
<dbReference type="SMR" id="Q30RI5"/>
<dbReference type="STRING" id="326298.Suden_1118"/>
<dbReference type="KEGG" id="tdn:Suden_1118"/>
<dbReference type="eggNOG" id="COG0503">
    <property type="taxonomic scope" value="Bacteria"/>
</dbReference>
<dbReference type="HOGENOM" id="CLU_063339_3_0_7"/>
<dbReference type="OrthoDB" id="9803963at2"/>
<dbReference type="UniPathway" id="UPA00588">
    <property type="reaction ID" value="UER00646"/>
</dbReference>
<dbReference type="Proteomes" id="UP000002714">
    <property type="component" value="Chromosome"/>
</dbReference>
<dbReference type="GO" id="GO:0005737">
    <property type="term" value="C:cytoplasm"/>
    <property type="evidence" value="ECO:0007669"/>
    <property type="project" value="UniProtKB-SubCell"/>
</dbReference>
<dbReference type="GO" id="GO:0002055">
    <property type="term" value="F:adenine binding"/>
    <property type="evidence" value="ECO:0007669"/>
    <property type="project" value="TreeGrafter"/>
</dbReference>
<dbReference type="GO" id="GO:0003999">
    <property type="term" value="F:adenine phosphoribosyltransferase activity"/>
    <property type="evidence" value="ECO:0007669"/>
    <property type="project" value="UniProtKB-UniRule"/>
</dbReference>
<dbReference type="GO" id="GO:0016208">
    <property type="term" value="F:AMP binding"/>
    <property type="evidence" value="ECO:0007669"/>
    <property type="project" value="TreeGrafter"/>
</dbReference>
<dbReference type="GO" id="GO:0006168">
    <property type="term" value="P:adenine salvage"/>
    <property type="evidence" value="ECO:0007669"/>
    <property type="project" value="InterPro"/>
</dbReference>
<dbReference type="GO" id="GO:0044209">
    <property type="term" value="P:AMP salvage"/>
    <property type="evidence" value="ECO:0007669"/>
    <property type="project" value="UniProtKB-UniRule"/>
</dbReference>
<dbReference type="GO" id="GO:0006166">
    <property type="term" value="P:purine ribonucleoside salvage"/>
    <property type="evidence" value="ECO:0007669"/>
    <property type="project" value="UniProtKB-KW"/>
</dbReference>
<dbReference type="CDD" id="cd06223">
    <property type="entry name" value="PRTases_typeI"/>
    <property type="match status" value="1"/>
</dbReference>
<dbReference type="FunFam" id="3.40.50.2020:FF:000021">
    <property type="entry name" value="Adenine phosphoribosyltransferase"/>
    <property type="match status" value="1"/>
</dbReference>
<dbReference type="Gene3D" id="3.40.50.2020">
    <property type="match status" value="1"/>
</dbReference>
<dbReference type="HAMAP" id="MF_00004">
    <property type="entry name" value="Aden_phosphoribosyltr"/>
    <property type="match status" value="1"/>
</dbReference>
<dbReference type="InterPro" id="IPR005764">
    <property type="entry name" value="Ade_phspho_trans"/>
</dbReference>
<dbReference type="InterPro" id="IPR000836">
    <property type="entry name" value="PRibTrfase_dom"/>
</dbReference>
<dbReference type="InterPro" id="IPR029057">
    <property type="entry name" value="PRTase-like"/>
</dbReference>
<dbReference type="InterPro" id="IPR050054">
    <property type="entry name" value="UPRTase/APRTase"/>
</dbReference>
<dbReference type="NCBIfam" id="TIGR01090">
    <property type="entry name" value="apt"/>
    <property type="match status" value="1"/>
</dbReference>
<dbReference type="NCBIfam" id="NF002634">
    <property type="entry name" value="PRK02304.1-3"/>
    <property type="match status" value="1"/>
</dbReference>
<dbReference type="NCBIfam" id="NF002636">
    <property type="entry name" value="PRK02304.1-5"/>
    <property type="match status" value="1"/>
</dbReference>
<dbReference type="PANTHER" id="PTHR32315">
    <property type="entry name" value="ADENINE PHOSPHORIBOSYLTRANSFERASE"/>
    <property type="match status" value="1"/>
</dbReference>
<dbReference type="PANTHER" id="PTHR32315:SF3">
    <property type="entry name" value="ADENINE PHOSPHORIBOSYLTRANSFERASE"/>
    <property type="match status" value="1"/>
</dbReference>
<dbReference type="Pfam" id="PF00156">
    <property type="entry name" value="Pribosyltran"/>
    <property type="match status" value="1"/>
</dbReference>
<dbReference type="SUPFAM" id="SSF53271">
    <property type="entry name" value="PRTase-like"/>
    <property type="match status" value="1"/>
</dbReference>
<dbReference type="PROSITE" id="PS00103">
    <property type="entry name" value="PUR_PYR_PR_TRANSFER"/>
    <property type="match status" value="1"/>
</dbReference>
<keyword id="KW-0963">Cytoplasm</keyword>
<keyword id="KW-0328">Glycosyltransferase</keyword>
<keyword id="KW-0660">Purine salvage</keyword>
<keyword id="KW-1185">Reference proteome</keyword>
<keyword id="KW-0808">Transferase</keyword>
<reference key="1">
    <citation type="journal article" date="2008" name="Appl. Environ. Microbiol.">
        <title>Genome of the epsilonproteobacterial chemolithoautotroph Sulfurimonas denitrificans.</title>
        <authorList>
            <person name="Sievert S.M."/>
            <person name="Scott K.M."/>
            <person name="Klotz M.G."/>
            <person name="Chain P.S.G."/>
            <person name="Hauser L.J."/>
            <person name="Hemp J."/>
            <person name="Huegler M."/>
            <person name="Land M."/>
            <person name="Lapidus A."/>
            <person name="Larimer F.W."/>
            <person name="Lucas S."/>
            <person name="Malfatti S.A."/>
            <person name="Meyer F."/>
            <person name="Paulsen I.T."/>
            <person name="Ren Q."/>
            <person name="Simon J."/>
            <person name="Bailey K."/>
            <person name="Diaz E."/>
            <person name="Fitzpatrick K.A."/>
            <person name="Glover B."/>
            <person name="Gwatney N."/>
            <person name="Korajkic A."/>
            <person name="Long A."/>
            <person name="Mobberley J.M."/>
            <person name="Pantry S.N."/>
            <person name="Pazder G."/>
            <person name="Peterson S."/>
            <person name="Quintanilla J.D."/>
            <person name="Sprinkle R."/>
            <person name="Stephens J."/>
            <person name="Thomas P."/>
            <person name="Vaughn R."/>
            <person name="Weber M.J."/>
            <person name="Wooten L.L."/>
        </authorList>
    </citation>
    <scope>NUCLEOTIDE SEQUENCE [LARGE SCALE GENOMIC DNA]</scope>
    <source>
        <strain>ATCC 33889 / DSM 1251</strain>
    </source>
</reference>
<protein>
    <recommendedName>
        <fullName evidence="1">Adenine phosphoribosyltransferase</fullName>
        <shortName evidence="1">APRT</shortName>
        <ecNumber evidence="1">2.4.2.7</ecNumber>
    </recommendedName>
</protein>
<name>APT_SULDN</name>
<feature type="chain" id="PRO_0000321414" description="Adenine phosphoribosyltransferase">
    <location>
        <begin position="1"/>
        <end position="182"/>
    </location>
</feature>
<sequence length="182" mass="20042">MTLSNTERAIIESAIRDIKDFPKPGIVFKDITTLLNNGKAFGVTMNHLYEKYKEYNLDYIAGIDARGFIFGAALAQMLGVGFVPIRKKGKLPYTTISEKYSLEYGFDEVEIHLDAFSAIPNARVLLVDDLIATGGTAAASVKLINQAGALCVEACFILCLSFLDGYKKLQELTEVYSLVEVK</sequence>
<gene>
    <name evidence="1" type="primary">apt</name>
    <name type="ordered locus">Suden_1118</name>
</gene>
<accession>Q30RI5</accession>
<comment type="function">
    <text evidence="1">Catalyzes a salvage reaction resulting in the formation of AMP, that is energically less costly than de novo synthesis.</text>
</comment>
<comment type="catalytic activity">
    <reaction evidence="1">
        <text>AMP + diphosphate = 5-phospho-alpha-D-ribose 1-diphosphate + adenine</text>
        <dbReference type="Rhea" id="RHEA:16609"/>
        <dbReference type="ChEBI" id="CHEBI:16708"/>
        <dbReference type="ChEBI" id="CHEBI:33019"/>
        <dbReference type="ChEBI" id="CHEBI:58017"/>
        <dbReference type="ChEBI" id="CHEBI:456215"/>
        <dbReference type="EC" id="2.4.2.7"/>
    </reaction>
</comment>
<comment type="pathway">
    <text evidence="1">Purine metabolism; AMP biosynthesis via salvage pathway; AMP from adenine: step 1/1.</text>
</comment>
<comment type="subunit">
    <text evidence="1">Homodimer.</text>
</comment>
<comment type="subcellular location">
    <subcellularLocation>
        <location evidence="1">Cytoplasm</location>
    </subcellularLocation>
</comment>
<comment type="similarity">
    <text evidence="1">Belongs to the purine/pyrimidine phosphoribosyltransferase family.</text>
</comment>
<organism>
    <name type="scientific">Sulfurimonas denitrificans (strain ATCC 33889 / DSM 1251)</name>
    <name type="common">Thiomicrospira denitrificans (strain ATCC 33889 / DSM 1251)</name>
    <dbReference type="NCBI Taxonomy" id="326298"/>
    <lineage>
        <taxon>Bacteria</taxon>
        <taxon>Pseudomonadati</taxon>
        <taxon>Campylobacterota</taxon>
        <taxon>Epsilonproteobacteria</taxon>
        <taxon>Campylobacterales</taxon>
        <taxon>Sulfurimonadaceae</taxon>
        <taxon>Sulfurimonas</taxon>
    </lineage>
</organism>
<evidence type="ECO:0000255" key="1">
    <source>
        <dbReference type="HAMAP-Rule" id="MF_00004"/>
    </source>
</evidence>